<protein>
    <recommendedName>
        <fullName evidence="1">Queuine tRNA-ribosyltransferase</fullName>
        <ecNumber evidence="1">2.4.2.29</ecNumber>
    </recommendedName>
    <alternativeName>
        <fullName evidence="1">Guanine insertion enzyme</fullName>
    </alternativeName>
    <alternativeName>
        <fullName evidence="1">tRNA-guanine transglycosylase</fullName>
    </alternativeName>
</protein>
<organism>
    <name type="scientific">Natranaerobius thermophilus (strain ATCC BAA-1301 / DSM 18059 / JW/NM-WN-LF)</name>
    <dbReference type="NCBI Taxonomy" id="457570"/>
    <lineage>
        <taxon>Bacteria</taxon>
        <taxon>Bacillati</taxon>
        <taxon>Bacillota</taxon>
        <taxon>Clostridia</taxon>
        <taxon>Natranaerobiales</taxon>
        <taxon>Natranaerobiaceae</taxon>
        <taxon>Natranaerobius</taxon>
    </lineage>
</organism>
<feature type="chain" id="PRO_1000097552" description="Queuine tRNA-ribosyltransferase">
    <location>
        <begin position="1"/>
        <end position="370"/>
    </location>
</feature>
<feature type="region of interest" description="RNA binding" evidence="1">
    <location>
        <begin position="248"/>
        <end position="254"/>
    </location>
</feature>
<feature type="region of interest" description="RNA binding; important for wobble base 34 recognition" evidence="1">
    <location>
        <begin position="272"/>
        <end position="276"/>
    </location>
</feature>
<feature type="active site" description="Proton acceptor" evidence="1">
    <location>
        <position position="93"/>
    </location>
</feature>
<feature type="active site" description="Nucleophile" evidence="1">
    <location>
        <position position="267"/>
    </location>
</feature>
<feature type="binding site" evidence="1">
    <location>
        <begin position="93"/>
        <end position="97"/>
    </location>
    <ligand>
        <name>substrate</name>
    </ligand>
</feature>
<feature type="binding site" evidence="1">
    <location>
        <position position="147"/>
    </location>
    <ligand>
        <name>substrate</name>
    </ligand>
</feature>
<feature type="binding site" evidence="1">
    <location>
        <position position="190"/>
    </location>
    <ligand>
        <name>substrate</name>
    </ligand>
</feature>
<feature type="binding site" evidence="1">
    <location>
        <position position="217"/>
    </location>
    <ligand>
        <name>substrate</name>
    </ligand>
</feature>
<feature type="binding site" evidence="1">
    <location>
        <position position="305"/>
    </location>
    <ligand>
        <name>Zn(2+)</name>
        <dbReference type="ChEBI" id="CHEBI:29105"/>
    </ligand>
</feature>
<feature type="binding site" evidence="1">
    <location>
        <position position="307"/>
    </location>
    <ligand>
        <name>Zn(2+)</name>
        <dbReference type="ChEBI" id="CHEBI:29105"/>
    </ligand>
</feature>
<feature type="binding site" evidence="1">
    <location>
        <position position="310"/>
    </location>
    <ligand>
        <name>Zn(2+)</name>
        <dbReference type="ChEBI" id="CHEBI:29105"/>
    </ligand>
</feature>
<feature type="binding site" evidence="1">
    <location>
        <position position="336"/>
    </location>
    <ligand>
        <name>Zn(2+)</name>
        <dbReference type="ChEBI" id="CHEBI:29105"/>
    </ligand>
</feature>
<accession>B2A5K8</accession>
<sequence length="370" mass="42654">MAISYQLEQTSSESRARLGKLKTPRGEIQTPVFMPVGTQATVKTMTPEELKNLDAEIILGNTYHLHLRPGNDIVREADGLHKFMNWDRPILTDSGGFQVFSLGKLRQISEQGVEFRSHIDGSKLFMTPEKSIEIQEDLGSDIMMVFDECPPYPAEYDYVKESMDRTIRWSKRCLQHQKHPEKQALFGIVQGGMYPELRKESALKTTELDFPGYAVGGLSVGEPKEMMLEVLNTTIPYLPEEKPRYLMGVGTPDYIIEAVRMGIDMFDCVYPTRVARNGTAMTRFGNLTVRNAVFQRDFQPIEEDCDCYVCQNYSRAYLRHLIKANEILGFRLLTWHNLFFLIKLIKELRQAIADDNFLAWRDSFYKNYQN</sequence>
<evidence type="ECO:0000255" key="1">
    <source>
        <dbReference type="HAMAP-Rule" id="MF_00168"/>
    </source>
</evidence>
<reference key="1">
    <citation type="submission" date="2008-04" db="EMBL/GenBank/DDBJ databases">
        <title>Complete sequence of chromosome of Natranaerobius thermophilus JW/NM-WN-LF.</title>
        <authorList>
            <consortium name="US DOE Joint Genome Institute"/>
            <person name="Copeland A."/>
            <person name="Lucas S."/>
            <person name="Lapidus A."/>
            <person name="Glavina del Rio T."/>
            <person name="Dalin E."/>
            <person name="Tice H."/>
            <person name="Bruce D."/>
            <person name="Goodwin L."/>
            <person name="Pitluck S."/>
            <person name="Chertkov O."/>
            <person name="Brettin T."/>
            <person name="Detter J.C."/>
            <person name="Han C."/>
            <person name="Kuske C.R."/>
            <person name="Schmutz J."/>
            <person name="Larimer F."/>
            <person name="Land M."/>
            <person name="Hauser L."/>
            <person name="Kyrpides N."/>
            <person name="Lykidis A."/>
            <person name="Mesbah N.M."/>
            <person name="Wiegel J."/>
        </authorList>
    </citation>
    <scope>NUCLEOTIDE SEQUENCE [LARGE SCALE GENOMIC DNA]</scope>
    <source>
        <strain>ATCC BAA-1301 / DSM 18059 / JW/NM-WN-LF</strain>
    </source>
</reference>
<comment type="function">
    <text evidence="1">Catalyzes the base-exchange of a guanine (G) residue with the queuine precursor 7-aminomethyl-7-deazaguanine (PreQ1) at position 34 (anticodon wobble position) in tRNAs with GU(N) anticodons (tRNA-Asp, -Asn, -His and -Tyr). Catalysis occurs through a double-displacement mechanism. The nucleophile active site attacks the C1' of nucleotide 34 to detach the guanine base from the RNA, forming a covalent enzyme-RNA intermediate. The proton acceptor active site deprotonates the incoming PreQ1, allowing a nucleophilic attack on the C1' of the ribose to form the product. After dissociation, two additional enzymatic reactions on the tRNA convert PreQ1 to queuine (Q), resulting in the hypermodified nucleoside queuosine (7-(((4,5-cis-dihydroxy-2-cyclopenten-1-yl)amino)methyl)-7-deazaguanosine).</text>
</comment>
<comment type="catalytic activity">
    <reaction evidence="1">
        <text>7-aminomethyl-7-carbaguanine + guanosine(34) in tRNA = 7-aminomethyl-7-carbaguanosine(34) in tRNA + guanine</text>
        <dbReference type="Rhea" id="RHEA:24104"/>
        <dbReference type="Rhea" id="RHEA-COMP:10341"/>
        <dbReference type="Rhea" id="RHEA-COMP:10342"/>
        <dbReference type="ChEBI" id="CHEBI:16235"/>
        <dbReference type="ChEBI" id="CHEBI:58703"/>
        <dbReference type="ChEBI" id="CHEBI:74269"/>
        <dbReference type="ChEBI" id="CHEBI:82833"/>
        <dbReference type="EC" id="2.4.2.29"/>
    </reaction>
</comment>
<comment type="cofactor">
    <cofactor evidence="1">
        <name>Zn(2+)</name>
        <dbReference type="ChEBI" id="CHEBI:29105"/>
    </cofactor>
    <text evidence="1">Binds 1 zinc ion per subunit.</text>
</comment>
<comment type="pathway">
    <text evidence="1">tRNA modification; tRNA-queuosine biosynthesis.</text>
</comment>
<comment type="subunit">
    <text evidence="1">Homodimer. Within each dimer, one monomer is responsible for RNA recognition and catalysis, while the other monomer binds to the replacement base PreQ1.</text>
</comment>
<comment type="similarity">
    <text evidence="1">Belongs to the queuine tRNA-ribosyltransferase family.</text>
</comment>
<gene>
    <name evidence="1" type="primary">tgt</name>
    <name type="ordered locus">Nther_1791</name>
</gene>
<proteinExistence type="inferred from homology"/>
<keyword id="KW-0328">Glycosyltransferase</keyword>
<keyword id="KW-0479">Metal-binding</keyword>
<keyword id="KW-0671">Queuosine biosynthesis</keyword>
<keyword id="KW-1185">Reference proteome</keyword>
<keyword id="KW-0808">Transferase</keyword>
<keyword id="KW-0819">tRNA processing</keyword>
<keyword id="KW-0862">Zinc</keyword>
<name>TGT_NATTJ</name>
<dbReference type="EC" id="2.4.2.29" evidence="1"/>
<dbReference type="EMBL" id="CP001034">
    <property type="protein sequence ID" value="ACB85363.1"/>
    <property type="molecule type" value="Genomic_DNA"/>
</dbReference>
<dbReference type="RefSeq" id="WP_012448230.1">
    <property type="nucleotide sequence ID" value="NC_010718.1"/>
</dbReference>
<dbReference type="SMR" id="B2A5K8"/>
<dbReference type="FunCoup" id="B2A5K8">
    <property type="interactions" value="436"/>
</dbReference>
<dbReference type="STRING" id="457570.Nther_1791"/>
<dbReference type="KEGG" id="nth:Nther_1791"/>
<dbReference type="eggNOG" id="COG0343">
    <property type="taxonomic scope" value="Bacteria"/>
</dbReference>
<dbReference type="HOGENOM" id="CLU_022060_0_1_9"/>
<dbReference type="InParanoid" id="B2A5K8"/>
<dbReference type="OrthoDB" id="9805417at2"/>
<dbReference type="UniPathway" id="UPA00392"/>
<dbReference type="Proteomes" id="UP000001683">
    <property type="component" value="Chromosome"/>
</dbReference>
<dbReference type="GO" id="GO:0005829">
    <property type="term" value="C:cytosol"/>
    <property type="evidence" value="ECO:0007669"/>
    <property type="project" value="TreeGrafter"/>
</dbReference>
<dbReference type="GO" id="GO:0046872">
    <property type="term" value="F:metal ion binding"/>
    <property type="evidence" value="ECO:0007669"/>
    <property type="project" value="UniProtKB-KW"/>
</dbReference>
<dbReference type="GO" id="GO:0008479">
    <property type="term" value="F:tRNA-guanosine(34) queuine transglycosylase activity"/>
    <property type="evidence" value="ECO:0007669"/>
    <property type="project" value="UniProtKB-UniRule"/>
</dbReference>
<dbReference type="GO" id="GO:0008616">
    <property type="term" value="P:queuosine biosynthetic process"/>
    <property type="evidence" value="ECO:0007669"/>
    <property type="project" value="UniProtKB-UniRule"/>
</dbReference>
<dbReference type="GO" id="GO:0002099">
    <property type="term" value="P:tRNA wobble guanine modification"/>
    <property type="evidence" value="ECO:0007669"/>
    <property type="project" value="TreeGrafter"/>
</dbReference>
<dbReference type="GO" id="GO:0101030">
    <property type="term" value="P:tRNA-guanine transglycosylation"/>
    <property type="evidence" value="ECO:0007669"/>
    <property type="project" value="InterPro"/>
</dbReference>
<dbReference type="FunFam" id="3.20.20.105:FF:000001">
    <property type="entry name" value="Queuine tRNA-ribosyltransferase"/>
    <property type="match status" value="1"/>
</dbReference>
<dbReference type="Gene3D" id="3.20.20.105">
    <property type="entry name" value="Queuine tRNA-ribosyltransferase-like"/>
    <property type="match status" value="1"/>
</dbReference>
<dbReference type="HAMAP" id="MF_00168">
    <property type="entry name" value="Q_tRNA_Tgt"/>
    <property type="match status" value="1"/>
</dbReference>
<dbReference type="InterPro" id="IPR050076">
    <property type="entry name" value="ArchSynthase1/Queuine_TRR"/>
</dbReference>
<dbReference type="InterPro" id="IPR004803">
    <property type="entry name" value="TGT"/>
</dbReference>
<dbReference type="InterPro" id="IPR036511">
    <property type="entry name" value="TGT-like_sf"/>
</dbReference>
<dbReference type="InterPro" id="IPR002616">
    <property type="entry name" value="tRNA_ribo_trans-like"/>
</dbReference>
<dbReference type="NCBIfam" id="TIGR00430">
    <property type="entry name" value="Q_tRNA_tgt"/>
    <property type="match status" value="1"/>
</dbReference>
<dbReference type="NCBIfam" id="TIGR00449">
    <property type="entry name" value="tgt_general"/>
    <property type="match status" value="1"/>
</dbReference>
<dbReference type="PANTHER" id="PTHR46499">
    <property type="entry name" value="QUEUINE TRNA-RIBOSYLTRANSFERASE"/>
    <property type="match status" value="1"/>
</dbReference>
<dbReference type="PANTHER" id="PTHR46499:SF1">
    <property type="entry name" value="QUEUINE TRNA-RIBOSYLTRANSFERASE"/>
    <property type="match status" value="1"/>
</dbReference>
<dbReference type="Pfam" id="PF01702">
    <property type="entry name" value="TGT"/>
    <property type="match status" value="1"/>
</dbReference>
<dbReference type="SUPFAM" id="SSF51713">
    <property type="entry name" value="tRNA-guanine transglycosylase"/>
    <property type="match status" value="1"/>
</dbReference>